<accession>P23482</accession>
<name>HYFB_ECOLI</name>
<dbReference type="EC" id="1.-.-.-"/>
<dbReference type="EMBL" id="M63654">
    <property type="protein sequence ID" value="AAB88564.1"/>
    <property type="molecule type" value="Genomic_DNA"/>
</dbReference>
<dbReference type="EMBL" id="U00096">
    <property type="protein sequence ID" value="AAC75535.1"/>
    <property type="molecule type" value="Genomic_DNA"/>
</dbReference>
<dbReference type="EMBL" id="AP009048">
    <property type="protein sequence ID" value="BAA16360.1"/>
    <property type="molecule type" value="Genomic_DNA"/>
</dbReference>
<dbReference type="PIR" id="A65024">
    <property type="entry name" value="A65024"/>
</dbReference>
<dbReference type="RefSeq" id="NP_416977.1">
    <property type="nucleotide sequence ID" value="NC_000913.3"/>
</dbReference>
<dbReference type="RefSeq" id="WP_000339455.1">
    <property type="nucleotide sequence ID" value="NZ_LN832404.1"/>
</dbReference>
<dbReference type="SMR" id="P23482"/>
<dbReference type="BioGRID" id="4259196">
    <property type="interactions" value="9"/>
</dbReference>
<dbReference type="ComplexPortal" id="CPX-6028">
    <property type="entry name" value="Formate hydrogenlyase-H/Hydrogenase-4 complex"/>
</dbReference>
<dbReference type="DIP" id="DIP-9984N"/>
<dbReference type="FunCoup" id="P23482">
    <property type="interactions" value="384"/>
</dbReference>
<dbReference type="IntAct" id="P23482">
    <property type="interactions" value="3"/>
</dbReference>
<dbReference type="STRING" id="511145.b2482"/>
<dbReference type="TCDB" id="3.D.1.9.1">
    <property type="family name" value="the h+ or na+-translocating nadh dehydrogenase (ndh) family"/>
</dbReference>
<dbReference type="PaxDb" id="511145-b2482"/>
<dbReference type="EnsemblBacteria" id="AAC75535">
    <property type="protein sequence ID" value="AAC75535"/>
    <property type="gene ID" value="b2482"/>
</dbReference>
<dbReference type="GeneID" id="946961"/>
<dbReference type="KEGG" id="ecj:JW2467"/>
<dbReference type="KEGG" id="eco:b2482"/>
<dbReference type="KEGG" id="ecoc:C3026_13775"/>
<dbReference type="PATRIC" id="fig|1411691.4.peg.4257"/>
<dbReference type="EchoBASE" id="EB1259"/>
<dbReference type="eggNOG" id="COG0651">
    <property type="taxonomic scope" value="Bacteria"/>
</dbReference>
<dbReference type="HOGENOM" id="CLU_007100_8_1_6"/>
<dbReference type="InParanoid" id="P23482"/>
<dbReference type="OMA" id="AAMCFVK"/>
<dbReference type="OrthoDB" id="9768329at2"/>
<dbReference type="PhylomeDB" id="P23482"/>
<dbReference type="BioCyc" id="EcoCyc:MONOMER0-153"/>
<dbReference type="PRO" id="PR:P23482"/>
<dbReference type="Proteomes" id="UP000000625">
    <property type="component" value="Chromosome"/>
</dbReference>
<dbReference type="GO" id="GO:0009326">
    <property type="term" value="C:formate dehydrogenase complex"/>
    <property type="evidence" value="ECO:0000303"/>
    <property type="project" value="ComplexPortal"/>
</dbReference>
<dbReference type="GO" id="GO:0016020">
    <property type="term" value="C:membrane"/>
    <property type="evidence" value="ECO:0000303"/>
    <property type="project" value="ComplexPortal"/>
</dbReference>
<dbReference type="GO" id="GO:0005886">
    <property type="term" value="C:plasma membrane"/>
    <property type="evidence" value="ECO:0000255"/>
    <property type="project" value="EcoCyc"/>
</dbReference>
<dbReference type="GO" id="GO:0008137">
    <property type="term" value="F:NADH dehydrogenase (ubiquinone) activity"/>
    <property type="evidence" value="ECO:0007669"/>
    <property type="project" value="InterPro"/>
</dbReference>
<dbReference type="GO" id="GO:0019645">
    <property type="term" value="P:anaerobic electron transport chain"/>
    <property type="evidence" value="ECO:0000303"/>
    <property type="project" value="ComplexPortal"/>
</dbReference>
<dbReference type="GO" id="GO:0009061">
    <property type="term" value="P:anaerobic respiration"/>
    <property type="evidence" value="ECO:0000303"/>
    <property type="project" value="ComplexPortal"/>
</dbReference>
<dbReference type="GO" id="GO:0042773">
    <property type="term" value="P:ATP synthesis coupled electron transport"/>
    <property type="evidence" value="ECO:0007669"/>
    <property type="project" value="InterPro"/>
</dbReference>
<dbReference type="GO" id="GO:0015944">
    <property type="term" value="P:formate oxidation"/>
    <property type="evidence" value="ECO:0000303"/>
    <property type="project" value="ComplexPortal"/>
</dbReference>
<dbReference type="GO" id="GO:0006007">
    <property type="term" value="P:glucose catabolic process"/>
    <property type="evidence" value="ECO:0000303"/>
    <property type="project" value="ComplexPortal"/>
</dbReference>
<dbReference type="InterPro" id="IPR052175">
    <property type="entry name" value="ComplexI-like_HydComp"/>
</dbReference>
<dbReference type="InterPro" id="IPR003918">
    <property type="entry name" value="NADH_UbQ_OxRdtase"/>
</dbReference>
<dbReference type="InterPro" id="IPR001750">
    <property type="entry name" value="ND/Mrp_TM"/>
</dbReference>
<dbReference type="NCBIfam" id="NF005086">
    <property type="entry name" value="PRK06521.1"/>
    <property type="match status" value="1"/>
</dbReference>
<dbReference type="PANTHER" id="PTHR42682:SF3">
    <property type="entry name" value="FORMATE HYDROGENLYASE SUBUNIT 3-RELATED"/>
    <property type="match status" value="1"/>
</dbReference>
<dbReference type="PANTHER" id="PTHR42682">
    <property type="entry name" value="HYDROGENASE-4 COMPONENT F"/>
    <property type="match status" value="1"/>
</dbReference>
<dbReference type="Pfam" id="PF00361">
    <property type="entry name" value="Proton_antipo_M"/>
    <property type="match status" value="1"/>
</dbReference>
<dbReference type="PRINTS" id="PR01437">
    <property type="entry name" value="NUOXDRDTASE4"/>
</dbReference>
<sequence length="672" mass="72583">MDALQLLTWSLILYLFASLASLFLLGLDRLAIKLSGITSLVGGVIGIISGITQLHAGVTLVARFAPPFEFADLTLRMDSLSAFMVLVISLLVVVCSLYSLTYMREYEGKGAAAMGFFMNIFIASMVALLVMDNAFWFIVLFEMMSLSSWFLVIARQDKTSINAGMLYFFIAHAGSVLIMIAFLLMGRESGSLDFASFRTLSLSPGLASAVFLLAFFGFGAKAGMMPLHSWLPRAHPAAPSHASALMSGVMVKIGIFGILKVAMDLLAQTGLPLWWGILVMAIGAISALLGVLYALAEQDIKRLLAWSTVENVGIILLAVGVAMVGLSLHDPLLTVVGLLGALFHLLNHALFKGLLFLGAGAIISRLHTHDMEKMGALAKRMPWTAAACLIGCLAISAIPPLNGFISEWYTWQSLFSLSRVEAVALQLAGPIAMVMLAVTGGLAVMCFVKMYGITFCGAPRSTHAEEAQEVPNTMIVAMLLLAALCVLIALSASWLAPKIMHIAHAFTNTPPATVASGIALVPGTFHTQVTPSLLLLLLLAMPLLPGLYWLWCRSRRAAFRRTGDAWACGYGWENAMAPSGNGVMQPLRVVFSALFRLRQQLDPTLRLNKGLAHVTARAQSTEPFWDERVIRPIVSATQRLAKEIQHLQSGDFRLYCLYVVAALVVLLIAIAV</sequence>
<reference key="1">
    <citation type="journal article" date="1997" name="Microbiology">
        <title>A 12-cistron Escherichia coli operon (hyf) encoding a putative proton-translocating formate hydrogenlyase system.</title>
        <authorList>
            <person name="Andrews S.C."/>
            <person name="Berks B.C."/>
            <person name="McClay J."/>
            <person name="Ambler A."/>
            <person name="Quail M.A."/>
            <person name="Golby P."/>
            <person name="Guest J.R."/>
        </authorList>
    </citation>
    <scope>NUCLEOTIDE SEQUENCE [GENOMIC DNA]</scope>
    <scope>POSSIBLE FUNCTION</scope>
    <source>
        <strain>K12</strain>
    </source>
</reference>
<reference key="2">
    <citation type="journal article" date="1997" name="DNA Res.">
        <title>Construction of a contiguous 874-kb sequence of the Escherichia coli-K12 genome corresponding to 50.0-68.8 min on the linkage map and analysis of its sequence features.</title>
        <authorList>
            <person name="Yamamoto Y."/>
            <person name="Aiba H."/>
            <person name="Baba T."/>
            <person name="Hayashi K."/>
            <person name="Inada T."/>
            <person name="Isono K."/>
            <person name="Itoh T."/>
            <person name="Kimura S."/>
            <person name="Kitagawa M."/>
            <person name="Makino K."/>
            <person name="Miki T."/>
            <person name="Mitsuhashi N."/>
            <person name="Mizobuchi K."/>
            <person name="Mori H."/>
            <person name="Nakade S."/>
            <person name="Nakamura Y."/>
            <person name="Nashimoto H."/>
            <person name="Oshima T."/>
            <person name="Oyama S."/>
            <person name="Saito N."/>
            <person name="Sampei G."/>
            <person name="Satoh Y."/>
            <person name="Sivasundaram S."/>
            <person name="Tagami H."/>
            <person name="Takahashi H."/>
            <person name="Takeda J."/>
            <person name="Takemoto K."/>
            <person name="Uehara K."/>
            <person name="Wada C."/>
            <person name="Yamagata S."/>
            <person name="Horiuchi T."/>
        </authorList>
    </citation>
    <scope>NUCLEOTIDE SEQUENCE [LARGE SCALE GENOMIC DNA]</scope>
    <source>
        <strain>K12 / W3110 / ATCC 27325 / DSM 5911</strain>
    </source>
</reference>
<reference key="3">
    <citation type="journal article" date="1997" name="Science">
        <title>The complete genome sequence of Escherichia coli K-12.</title>
        <authorList>
            <person name="Blattner F.R."/>
            <person name="Plunkett G. III"/>
            <person name="Bloch C.A."/>
            <person name="Perna N.T."/>
            <person name="Burland V."/>
            <person name="Riley M."/>
            <person name="Collado-Vides J."/>
            <person name="Glasner J.D."/>
            <person name="Rode C.K."/>
            <person name="Mayhew G.F."/>
            <person name="Gregor J."/>
            <person name="Davis N.W."/>
            <person name="Kirkpatrick H.A."/>
            <person name="Goeden M.A."/>
            <person name="Rose D.J."/>
            <person name="Mau B."/>
            <person name="Shao Y."/>
        </authorList>
    </citation>
    <scope>NUCLEOTIDE SEQUENCE [LARGE SCALE GENOMIC DNA]</scope>
    <source>
        <strain>K12 / MG1655 / ATCC 47076</strain>
    </source>
</reference>
<reference key="4">
    <citation type="journal article" date="2006" name="Mol. Syst. Biol.">
        <title>Highly accurate genome sequences of Escherichia coli K-12 strains MG1655 and W3110.</title>
        <authorList>
            <person name="Hayashi K."/>
            <person name="Morooka N."/>
            <person name="Yamamoto Y."/>
            <person name="Fujita K."/>
            <person name="Isono K."/>
            <person name="Choi S."/>
            <person name="Ohtsubo E."/>
            <person name="Baba T."/>
            <person name="Wanner B.L."/>
            <person name="Mori H."/>
            <person name="Horiuchi T."/>
        </authorList>
    </citation>
    <scope>NUCLEOTIDE SEQUENCE [LARGE SCALE GENOMIC DNA]</scope>
    <source>
        <strain>K12 / W3110 / ATCC 27325 / DSM 5911</strain>
    </source>
</reference>
<reference key="5">
    <citation type="journal article" date="1991" name="J. Gen. Microbiol.">
        <title>A molecular analysis of the 53.3 minute region of the Escherichia coli linkage map.</title>
        <authorList>
            <person name="Andrews S.C."/>
            <person name="Harrison P.M."/>
            <person name="Guest J.R."/>
        </authorList>
    </citation>
    <scope>NUCLEOTIDE SEQUENCE [GENOMIC DNA] OF 1-34</scope>
    <source>
        <strain>K12</strain>
    </source>
</reference>
<reference key="6">
    <citation type="journal article" date="2002" name="J. Bacteriol.">
        <title>Regulation of the hydrogenase-4 operon of Escherichia coli by the sigma(54)-dependent transcriptional activators FhlA and HyfR.</title>
        <authorList>
            <person name="Skibinski D.A."/>
            <person name="Golby P."/>
            <person name="Chang Y.S."/>
            <person name="Sargent F."/>
            <person name="Hoffman R."/>
            <person name="Harper R."/>
            <person name="Guest J.R."/>
            <person name="Attwood M.M."/>
            <person name="Berks B.C."/>
            <person name="Andrews S.C."/>
        </authorList>
    </citation>
    <scope>INDUCTION</scope>
    <scope>OPERON</scope>
    <scope>DISRUPTION PHENOTYPE</scope>
    <source>
        <strain>K12 / MC4100 / ATCC 35695 / DSM 6574</strain>
    </source>
</reference>
<reference key="7">
    <citation type="journal article" date="2005" name="Science">
        <title>Global topology analysis of the Escherichia coli inner membrane proteome.</title>
        <authorList>
            <person name="Daley D.O."/>
            <person name="Rapp M."/>
            <person name="Granseth E."/>
            <person name="Melen K."/>
            <person name="Drew D."/>
            <person name="von Heijne G."/>
        </authorList>
    </citation>
    <scope>SUBCELLULAR LOCATION</scope>
    <scope>TOPOLOGY [LARGE SCALE ANALYSIS]</scope>
    <source>
        <strain>K12 / MG1655 / ATCC 47076</strain>
    </source>
</reference>
<gene>
    <name evidence="4" type="primary">hyfB</name>
    <name type="synonym">yffF</name>
    <name type="ordered locus">b2482</name>
    <name type="ordered locus">JW2467</name>
</gene>
<comment type="function">
    <text evidence="6">Possible component of hydrogenase 4.</text>
</comment>
<comment type="interaction">
    <interactant intactId="EBI-554793">
        <id>P23482</id>
    </interactant>
    <interactant intactId="EBI-560596">
        <id>P37052</id>
        <label>ychJ</label>
    </interactant>
    <organismsDiffer>false</organismsDiffer>
    <experiments>2</experiments>
</comment>
<comment type="subcellular location">
    <subcellularLocation>
        <location evidence="3">Cell inner membrane</location>
        <topology evidence="5">Multi-pass membrane protein</topology>
    </subcellularLocation>
</comment>
<comment type="induction">
    <text evidence="2">Most efficiently induced by formate during post-exponential growth at low external pH (pH 6.5) in the absence of respiratory electron acceptors O(2+), NO(3-) or trimethylamine-N-oxide, i.e. under anaerobic control. Transcription is activated by FhlA and HyfR, inhibited by HycA, part of the sigma-54 (rpoN) regulon. Second member of a 10 gene operon (hyfABCDEFGHIJ); it is not clear if the 2 following genes (hydR-focB) are also in the operon.</text>
</comment>
<comment type="disruption phenotype">
    <text evidence="2">Deletion of most of the operon (hyfBCDEFGHIJR) has no visible effect under fermentative growth conditions at pH 6.5 or 7.5, during aerobic or anaerobic glucose-limited growth at pH 6.5, or when combined with hyc mutations.</text>
</comment>
<comment type="similarity">
    <text evidence="5">Belongs to the complex I subunit 5 family.</text>
</comment>
<keyword id="KW-0997">Cell inner membrane</keyword>
<keyword id="KW-1003">Cell membrane</keyword>
<keyword id="KW-0472">Membrane</keyword>
<keyword id="KW-0560">Oxidoreductase</keyword>
<keyword id="KW-1185">Reference proteome</keyword>
<keyword id="KW-0812">Transmembrane</keyword>
<keyword id="KW-1133">Transmembrane helix</keyword>
<feature type="chain" id="PRO_0000118226" description="Hydrogenase-4 component B">
    <location>
        <begin position="1"/>
        <end position="672"/>
    </location>
</feature>
<feature type="topological domain" description="Periplasmic" evidence="1">
    <location>
        <begin position="1"/>
        <end position="5"/>
    </location>
</feature>
<feature type="transmembrane region" description="Helical" evidence="1">
    <location>
        <begin position="6"/>
        <end position="26"/>
    </location>
</feature>
<feature type="topological domain" description="Cytoplasmic" evidence="1">
    <location>
        <begin position="27"/>
        <end position="30"/>
    </location>
</feature>
<feature type="transmembrane region" description="Helical" evidence="1">
    <location>
        <begin position="31"/>
        <end position="51"/>
    </location>
</feature>
<feature type="topological domain" description="Periplasmic" evidence="1">
    <location>
        <begin position="52"/>
        <end position="79"/>
    </location>
</feature>
<feature type="transmembrane region" description="Helical" evidence="1">
    <location>
        <begin position="80"/>
        <end position="100"/>
    </location>
</feature>
<feature type="topological domain" description="Cytoplasmic" evidence="1">
    <location>
        <begin position="101"/>
        <end position="119"/>
    </location>
</feature>
<feature type="transmembrane region" description="Helical" evidence="1">
    <location>
        <begin position="120"/>
        <end position="140"/>
    </location>
</feature>
<feature type="topological domain" description="Periplasmic" evidence="1">
    <location>
        <begin position="141"/>
        <end position="164"/>
    </location>
</feature>
<feature type="transmembrane region" description="Helical" evidence="1">
    <location>
        <begin position="165"/>
        <end position="185"/>
    </location>
</feature>
<feature type="topological domain" description="Cytoplasmic" evidence="1">
    <location>
        <begin position="186"/>
        <end position="199"/>
    </location>
</feature>
<feature type="transmembrane region" description="Helical" evidence="1">
    <location>
        <begin position="200"/>
        <end position="220"/>
    </location>
</feature>
<feature type="topological domain" description="Periplasmic" evidence="1">
    <location>
        <begin position="221"/>
        <end position="242"/>
    </location>
</feature>
<feature type="transmembrane region" description="Helical" evidence="1">
    <location>
        <begin position="243"/>
        <end position="263"/>
    </location>
</feature>
<feature type="topological domain" description="Cytoplasmic" evidence="1">
    <location>
        <begin position="264"/>
        <end position="272"/>
    </location>
</feature>
<feature type="transmembrane region" description="Helical" evidence="1">
    <location>
        <begin position="273"/>
        <end position="293"/>
    </location>
</feature>
<feature type="topological domain" description="Periplasmic" evidence="1">
    <location>
        <begin position="294"/>
        <end position="311"/>
    </location>
</feature>
<feature type="transmembrane region" description="Helical" evidence="1">
    <location>
        <begin position="312"/>
        <end position="332"/>
    </location>
</feature>
<feature type="topological domain" description="Cytoplasmic" evidence="1">
    <location>
        <begin position="333"/>
        <end position="342"/>
    </location>
</feature>
<feature type="transmembrane region" description="Helical" evidence="1">
    <location>
        <begin position="343"/>
        <end position="363"/>
    </location>
</feature>
<feature type="topological domain" description="Periplasmic" evidence="1">
    <location>
        <begin position="364"/>
        <end position="384"/>
    </location>
</feature>
<feature type="transmembrane region" description="Helical" evidence="1">
    <location>
        <begin position="385"/>
        <end position="405"/>
    </location>
</feature>
<feature type="topological domain" description="Cytoplasmic" evidence="1">
    <location>
        <begin position="406"/>
        <end position="427"/>
    </location>
</feature>
<feature type="transmembrane region" description="Helical" evidence="1">
    <location>
        <begin position="428"/>
        <end position="448"/>
    </location>
</feature>
<feature type="topological domain" description="Periplasmic" evidence="1">
    <location>
        <begin position="449"/>
        <end position="474"/>
    </location>
</feature>
<feature type="transmembrane region" description="Helical" evidence="1">
    <location>
        <begin position="475"/>
        <end position="495"/>
    </location>
</feature>
<feature type="topological domain" description="Cytoplasmic" evidence="1">
    <location>
        <begin position="496"/>
        <end position="504"/>
    </location>
</feature>
<feature type="transmembrane region" description="Helical" evidence="1">
    <location>
        <begin position="505"/>
        <end position="525"/>
    </location>
</feature>
<feature type="topological domain" description="Periplasmic" evidence="1">
    <location>
        <begin position="526"/>
        <end position="531"/>
    </location>
</feature>
<feature type="transmembrane region" description="Helical" evidence="1">
    <location>
        <begin position="532"/>
        <end position="552"/>
    </location>
</feature>
<feature type="topological domain" description="Cytoplasmic" evidence="1">
    <location>
        <begin position="553"/>
        <end position="651"/>
    </location>
</feature>
<feature type="transmembrane region" description="Helical" evidence="1">
    <location>
        <begin position="652"/>
        <end position="672"/>
    </location>
</feature>
<protein>
    <recommendedName>
        <fullName>Hydrogenase-4 component B</fullName>
        <ecNumber>1.-.-.-</ecNumber>
    </recommendedName>
</protein>
<proteinExistence type="evidence at protein level"/>
<evidence type="ECO:0000255" key="1"/>
<evidence type="ECO:0000269" key="2">
    <source>
    </source>
</evidence>
<evidence type="ECO:0000269" key="3">
    <source>
    </source>
</evidence>
<evidence type="ECO:0000303" key="4">
    <source>
    </source>
</evidence>
<evidence type="ECO:0000305" key="5"/>
<evidence type="ECO:0000305" key="6">
    <source>
    </source>
</evidence>
<organism>
    <name type="scientific">Escherichia coli (strain K12)</name>
    <dbReference type="NCBI Taxonomy" id="83333"/>
    <lineage>
        <taxon>Bacteria</taxon>
        <taxon>Pseudomonadati</taxon>
        <taxon>Pseudomonadota</taxon>
        <taxon>Gammaproteobacteria</taxon>
        <taxon>Enterobacterales</taxon>
        <taxon>Enterobacteriaceae</taxon>
        <taxon>Escherichia</taxon>
    </lineage>
</organism>